<comment type="function">
    <text evidence="1">Nuclear genome-encoded probable GTPase involved in ribosome biogenesis in chloroplasts. Plays a role in 16S rRNA maturation in plastids and may contribute to the assembly of the small (30S) ribosomal subunit.</text>
</comment>
<comment type="subcellular location">
    <subcellularLocation>
        <location evidence="1">Plastid</location>
        <location evidence="1">Chloroplast stroma</location>
        <location evidence="1">Chloroplast nucleoid</location>
    </subcellularLocation>
</comment>
<comment type="similarity">
    <text evidence="5 6">Belongs to the TRAFAC class TrmE-Era-EngA-EngB-Septin-like GTPase superfamily. Era GTPase family.</text>
</comment>
<comment type="sequence caution" evidence="6">
    <conflict type="erroneous gene model prediction">
        <sequence resource="EMBL-CDS" id="AAU10665"/>
    </conflict>
</comment>
<comment type="sequence caution" evidence="6">
    <conflict type="miscellaneous discrepancy">
        <sequence resource="EMBL-CDS" id="BAG99534"/>
    </conflict>
    <text>Sequencing errors.</text>
</comment>
<comment type="sequence caution" evidence="6">
    <conflict type="erroneous gene model prediction">
        <sequence resource="EMBL-CDS" id="BAH93259"/>
    </conflict>
</comment>
<comment type="sequence caution" evidence="6">
    <conflict type="erroneous gene model prediction">
        <sequence resource="EMBL-CDS" id="BAS95385"/>
    </conflict>
</comment>
<proteinExistence type="evidence at transcript level"/>
<organism>
    <name type="scientific">Oryza sativa subsp. japonica</name>
    <name type="common">Rice</name>
    <dbReference type="NCBI Taxonomy" id="39947"/>
    <lineage>
        <taxon>Eukaryota</taxon>
        <taxon>Viridiplantae</taxon>
        <taxon>Streptophyta</taxon>
        <taxon>Embryophyta</taxon>
        <taxon>Tracheophyta</taxon>
        <taxon>Spermatophyta</taxon>
        <taxon>Magnoliopsida</taxon>
        <taxon>Liliopsida</taxon>
        <taxon>Poales</taxon>
        <taxon>Poaceae</taxon>
        <taxon>BOP clade</taxon>
        <taxon>Oryzoideae</taxon>
        <taxon>Oryzeae</taxon>
        <taxon>Oryzinae</taxon>
        <taxon>Oryza</taxon>
        <taxon>Oryza sativa</taxon>
    </lineage>
</organism>
<evidence type="ECO:0000250" key="1">
    <source>
        <dbReference type="UniProtKB" id="K7UTH7"/>
    </source>
</evidence>
<evidence type="ECO:0000250" key="2">
    <source>
        <dbReference type="UniProtKB" id="P06616"/>
    </source>
</evidence>
<evidence type="ECO:0000255" key="3"/>
<evidence type="ECO:0000255" key="4">
    <source>
        <dbReference type="PROSITE-ProRule" id="PRU00118"/>
    </source>
</evidence>
<evidence type="ECO:0000255" key="5">
    <source>
        <dbReference type="PROSITE-ProRule" id="PRU01050"/>
    </source>
</evidence>
<evidence type="ECO:0000305" key="6"/>
<evidence type="ECO:0000312" key="7">
    <source>
        <dbReference type="EMBL" id="AAU10665.1"/>
    </source>
</evidence>
<evidence type="ECO:0000312" key="8">
    <source>
        <dbReference type="EMBL" id="BAS95385.1"/>
    </source>
</evidence>
<evidence type="ECO:0000312" key="9">
    <source>
        <dbReference type="EMBL" id="EEE64721.1"/>
    </source>
</evidence>
<dbReference type="EMBL" id="AC120986">
    <property type="protein sequence ID" value="AAU10665.1"/>
    <property type="status" value="ALT_SEQ"/>
    <property type="molecule type" value="Genomic_DNA"/>
</dbReference>
<dbReference type="EMBL" id="AP008211">
    <property type="protein sequence ID" value="BAH93259.1"/>
    <property type="status" value="ALT_SEQ"/>
    <property type="molecule type" value="Genomic_DNA"/>
</dbReference>
<dbReference type="EMBL" id="AP014961">
    <property type="protein sequence ID" value="BAS95385.1"/>
    <property type="status" value="ALT_SEQ"/>
    <property type="molecule type" value="Genomic_DNA"/>
</dbReference>
<dbReference type="EMBL" id="CM000142">
    <property type="protein sequence ID" value="EEE64721.1"/>
    <property type="molecule type" value="Genomic_DNA"/>
</dbReference>
<dbReference type="EMBL" id="AK112068">
    <property type="protein sequence ID" value="BAG99534.1"/>
    <property type="status" value="ALT_SEQ"/>
    <property type="molecule type" value="mRNA"/>
</dbReference>
<dbReference type="SMR" id="B9FI63"/>
<dbReference type="FunCoup" id="B9FI63">
    <property type="interactions" value="334"/>
</dbReference>
<dbReference type="STRING" id="39947.B9FI63"/>
<dbReference type="PaxDb" id="39947-B9FI63"/>
<dbReference type="EnsemblPlants" id="Os05t0567300-02">
    <property type="protein sequence ID" value="Os05t0567300-02"/>
    <property type="gene ID" value="Os05g0567300"/>
</dbReference>
<dbReference type="Gramene" id="Os05t0567300-02">
    <property type="protein sequence ID" value="Os05t0567300-02"/>
    <property type="gene ID" value="Os05g0567300"/>
</dbReference>
<dbReference type="KEGG" id="dosa:Os05g0567300"/>
<dbReference type="eggNOG" id="KOG1423">
    <property type="taxonomic scope" value="Eukaryota"/>
</dbReference>
<dbReference type="InParanoid" id="B9FI63"/>
<dbReference type="Proteomes" id="UP000000763">
    <property type="component" value="Chromosome 5"/>
</dbReference>
<dbReference type="Proteomes" id="UP000007752">
    <property type="component" value="Chromosome 5"/>
</dbReference>
<dbReference type="Proteomes" id="UP000059680">
    <property type="component" value="Chromosome 5"/>
</dbReference>
<dbReference type="GO" id="GO:0042644">
    <property type="term" value="C:chloroplast nucleoid"/>
    <property type="evidence" value="ECO:0000250"/>
    <property type="project" value="UniProtKB"/>
</dbReference>
<dbReference type="GO" id="GO:0005525">
    <property type="term" value="F:GTP binding"/>
    <property type="evidence" value="ECO:0007669"/>
    <property type="project" value="UniProtKB-KW"/>
</dbReference>
<dbReference type="GO" id="GO:0003729">
    <property type="term" value="F:mRNA binding"/>
    <property type="evidence" value="ECO:0007669"/>
    <property type="project" value="EnsemblPlants"/>
</dbReference>
<dbReference type="GO" id="GO:0043024">
    <property type="term" value="F:ribosomal small subunit binding"/>
    <property type="evidence" value="ECO:0000318"/>
    <property type="project" value="GO_Central"/>
</dbReference>
<dbReference type="GO" id="GO:0019843">
    <property type="term" value="F:rRNA binding"/>
    <property type="evidence" value="ECO:0000318"/>
    <property type="project" value="GO_Central"/>
</dbReference>
<dbReference type="GO" id="GO:0000028">
    <property type="term" value="P:ribosomal small subunit assembly"/>
    <property type="evidence" value="ECO:0000318"/>
    <property type="project" value="GO_Central"/>
</dbReference>
<dbReference type="GO" id="GO:0042254">
    <property type="term" value="P:ribosome biogenesis"/>
    <property type="evidence" value="ECO:0000250"/>
    <property type="project" value="UniProtKB"/>
</dbReference>
<dbReference type="GO" id="GO:0006364">
    <property type="term" value="P:rRNA processing"/>
    <property type="evidence" value="ECO:0000250"/>
    <property type="project" value="UniProtKB"/>
</dbReference>
<dbReference type="CDD" id="cd04163">
    <property type="entry name" value="Era"/>
    <property type="match status" value="1"/>
</dbReference>
<dbReference type="CDD" id="cd22534">
    <property type="entry name" value="KH-II_Era"/>
    <property type="match status" value="1"/>
</dbReference>
<dbReference type="FunFam" id="3.30.300.20:FF:000003">
    <property type="entry name" value="GTPase Era"/>
    <property type="match status" value="1"/>
</dbReference>
<dbReference type="FunFam" id="3.40.50.300:FF:000094">
    <property type="entry name" value="GTPase Era"/>
    <property type="match status" value="1"/>
</dbReference>
<dbReference type="Gene3D" id="3.30.300.20">
    <property type="match status" value="1"/>
</dbReference>
<dbReference type="Gene3D" id="3.40.50.300">
    <property type="entry name" value="P-loop containing nucleotide triphosphate hydrolases"/>
    <property type="match status" value="1"/>
</dbReference>
<dbReference type="HAMAP" id="MF_00367">
    <property type="entry name" value="GTPase_Era"/>
    <property type="match status" value="1"/>
</dbReference>
<dbReference type="InterPro" id="IPR030388">
    <property type="entry name" value="G_ERA_dom"/>
</dbReference>
<dbReference type="InterPro" id="IPR006073">
    <property type="entry name" value="GTP-bd"/>
</dbReference>
<dbReference type="InterPro" id="IPR005662">
    <property type="entry name" value="GTPase_Era-like"/>
</dbReference>
<dbReference type="InterPro" id="IPR015946">
    <property type="entry name" value="KH_dom-like_a/b"/>
</dbReference>
<dbReference type="InterPro" id="IPR004044">
    <property type="entry name" value="KH_dom_type_2"/>
</dbReference>
<dbReference type="InterPro" id="IPR009019">
    <property type="entry name" value="KH_sf_prok-type"/>
</dbReference>
<dbReference type="InterPro" id="IPR027417">
    <property type="entry name" value="P-loop_NTPase"/>
</dbReference>
<dbReference type="InterPro" id="IPR005225">
    <property type="entry name" value="Small_GTP-bd"/>
</dbReference>
<dbReference type="NCBIfam" id="TIGR00436">
    <property type="entry name" value="era"/>
    <property type="match status" value="1"/>
</dbReference>
<dbReference type="NCBIfam" id="NF000908">
    <property type="entry name" value="PRK00089.1"/>
    <property type="match status" value="1"/>
</dbReference>
<dbReference type="NCBIfam" id="TIGR00231">
    <property type="entry name" value="small_GTP"/>
    <property type="match status" value="1"/>
</dbReference>
<dbReference type="PANTHER" id="PTHR42698">
    <property type="entry name" value="GTPASE ERA"/>
    <property type="match status" value="1"/>
</dbReference>
<dbReference type="PANTHER" id="PTHR42698:SF2">
    <property type="entry name" value="GTPASE ERA-LIKE, CHLOROPLASTIC"/>
    <property type="match status" value="1"/>
</dbReference>
<dbReference type="Pfam" id="PF07650">
    <property type="entry name" value="KH_2"/>
    <property type="match status" value="1"/>
</dbReference>
<dbReference type="Pfam" id="PF01926">
    <property type="entry name" value="MMR_HSR1"/>
    <property type="match status" value="1"/>
</dbReference>
<dbReference type="PRINTS" id="PR00326">
    <property type="entry name" value="GTP1OBG"/>
</dbReference>
<dbReference type="SUPFAM" id="SSF52540">
    <property type="entry name" value="P-loop containing nucleoside triphosphate hydrolases"/>
    <property type="match status" value="1"/>
</dbReference>
<dbReference type="SUPFAM" id="SSF54814">
    <property type="entry name" value="Prokaryotic type KH domain (KH-domain type II)"/>
    <property type="match status" value="1"/>
</dbReference>
<dbReference type="PROSITE" id="PS51713">
    <property type="entry name" value="G_ERA"/>
    <property type="match status" value="1"/>
</dbReference>
<dbReference type="PROSITE" id="PS50823">
    <property type="entry name" value="KH_TYPE_2"/>
    <property type="match status" value="1"/>
</dbReference>
<gene>
    <name evidence="8" type="ordered locus">Os05g0567300</name>
    <name evidence="6" type="ordered locus">LOC_Os05g49220</name>
    <name evidence="7" type="ORF">OJ1781_H11.13</name>
    <name evidence="9" type="ORF">OsJ_19577</name>
</gene>
<reference key="1">
    <citation type="journal article" date="2005" name="Mol. Genet. Genomics">
        <title>A fine physical map of the rice chromosome 5.</title>
        <authorList>
            <person name="Cheng C.-H."/>
            <person name="Chung M.C."/>
            <person name="Liu S.-M."/>
            <person name="Chen S.-K."/>
            <person name="Kao F.Y."/>
            <person name="Lin S.-J."/>
            <person name="Hsiao S.-H."/>
            <person name="Tseng I.C."/>
            <person name="Hsing Y.-I.C."/>
            <person name="Wu H.-P."/>
            <person name="Chen C.-S."/>
            <person name="Shaw J.-F."/>
            <person name="Wu J."/>
            <person name="Matsumoto T."/>
            <person name="Sasaki T."/>
            <person name="Chen H.-C."/>
            <person name="Chow T.-Y."/>
        </authorList>
    </citation>
    <scope>NUCLEOTIDE SEQUENCE [LARGE SCALE GENOMIC DNA]</scope>
    <source>
        <strain>cv. Nipponbare</strain>
    </source>
</reference>
<reference key="2">
    <citation type="journal article" date="2005" name="Nature">
        <title>The map-based sequence of the rice genome.</title>
        <authorList>
            <consortium name="International rice genome sequencing project (IRGSP)"/>
        </authorList>
    </citation>
    <scope>NUCLEOTIDE SEQUENCE [LARGE SCALE GENOMIC DNA]</scope>
    <source>
        <strain>cv. Nipponbare</strain>
    </source>
</reference>
<reference key="3">
    <citation type="journal article" date="2008" name="Nucleic Acids Res.">
        <title>The rice annotation project database (RAP-DB): 2008 update.</title>
        <authorList>
            <consortium name="The rice annotation project (RAP)"/>
        </authorList>
    </citation>
    <scope>GENOME REANNOTATION</scope>
    <source>
        <strain>cv. Nipponbare</strain>
    </source>
</reference>
<reference key="4">
    <citation type="journal article" date="2013" name="Rice">
        <title>Improvement of the Oryza sativa Nipponbare reference genome using next generation sequence and optical map data.</title>
        <authorList>
            <person name="Kawahara Y."/>
            <person name="de la Bastide M."/>
            <person name="Hamilton J.P."/>
            <person name="Kanamori H."/>
            <person name="McCombie W.R."/>
            <person name="Ouyang S."/>
            <person name="Schwartz D.C."/>
            <person name="Tanaka T."/>
            <person name="Wu J."/>
            <person name="Zhou S."/>
            <person name="Childs K.L."/>
            <person name="Davidson R.M."/>
            <person name="Lin H."/>
            <person name="Quesada-Ocampo L."/>
            <person name="Vaillancourt B."/>
            <person name="Sakai H."/>
            <person name="Lee S.S."/>
            <person name="Kim J."/>
            <person name="Numa H."/>
            <person name="Itoh T."/>
            <person name="Buell C.R."/>
            <person name="Matsumoto T."/>
        </authorList>
    </citation>
    <scope>GENOME REANNOTATION</scope>
    <source>
        <strain>cv. Nipponbare</strain>
    </source>
</reference>
<reference key="5">
    <citation type="journal article" date="2003" name="Science">
        <title>Collection, mapping, and annotation of over 28,000 cDNA clones from japonica rice.</title>
        <authorList>
            <consortium name="The rice full-length cDNA consortium"/>
        </authorList>
    </citation>
    <scope>NUCLEOTIDE SEQUENCE [LARGE SCALE MRNA]</scope>
    <source>
        <strain>cv. Nipponbare</strain>
    </source>
</reference>
<protein>
    <recommendedName>
        <fullName evidence="6">GTPase ERA-like, chloroplastic</fullName>
    </recommendedName>
    <alternativeName>
        <fullName evidence="6">GTP-binding protein Era-like</fullName>
    </alternativeName>
</protein>
<accession>B9FI63</accession>
<accession>C7J2L9</accession>
<accession>Q688W4</accession>
<keyword id="KW-0150">Chloroplast</keyword>
<keyword id="KW-0342">GTP-binding</keyword>
<keyword id="KW-0547">Nucleotide-binding</keyword>
<keyword id="KW-0934">Plastid</keyword>
<keyword id="KW-1185">Reference proteome</keyword>
<keyword id="KW-0690">Ribosome biogenesis</keyword>
<keyword id="KW-0694">RNA-binding</keyword>
<keyword id="KW-0809">Transit peptide</keyword>
<feature type="transit peptide" description="Chloroplast" evidence="3">
    <location>
        <begin position="1"/>
        <end position="60"/>
    </location>
</feature>
<feature type="chain" id="PRO_0000441336" description="GTPase ERA-like, chloroplastic">
    <location>
        <begin position="61"/>
        <end position="423"/>
    </location>
</feature>
<feature type="domain" description="Era-type G" evidence="5">
    <location>
        <begin position="124"/>
        <end position="294"/>
    </location>
</feature>
<feature type="domain" description="KH type-2" evidence="4">
    <location>
        <begin position="325"/>
        <end position="402"/>
    </location>
</feature>
<feature type="region of interest" description="G1" evidence="5">
    <location>
        <begin position="132"/>
        <end position="139"/>
    </location>
</feature>
<feature type="region of interest" description="G2" evidence="5">
    <location>
        <begin position="158"/>
        <end position="162"/>
    </location>
</feature>
<feature type="region of interest" description="G3" evidence="5">
    <location>
        <begin position="179"/>
        <end position="182"/>
    </location>
</feature>
<feature type="region of interest" description="G4" evidence="5">
    <location>
        <begin position="244"/>
        <end position="247"/>
    </location>
</feature>
<feature type="region of interest" description="G5" evidence="5">
    <location>
        <begin position="273"/>
        <end position="275"/>
    </location>
</feature>
<feature type="binding site" evidence="2">
    <location>
        <begin position="132"/>
        <end position="139"/>
    </location>
    <ligand>
        <name>GTP</name>
        <dbReference type="ChEBI" id="CHEBI:37565"/>
    </ligand>
</feature>
<feature type="binding site" evidence="2">
    <location>
        <begin position="179"/>
        <end position="183"/>
    </location>
    <ligand>
        <name>GTP</name>
        <dbReference type="ChEBI" id="CHEBI:37565"/>
    </ligand>
</feature>
<feature type="binding site" evidence="2">
    <location>
        <begin position="244"/>
        <end position="247"/>
    </location>
    <ligand>
        <name>GTP</name>
        <dbReference type="ChEBI" id="CHEBI:37565"/>
    </ligand>
</feature>
<name>ERA_ORYSJ</name>
<sequence>MELGLALRLVAPPPRLPCRALQPPPMPCFSPCAARRSRIRSSRLERRVGVVVSGGSMASLAMEEEEEEEWEEAEEEAEGWQEEEAAVVTTRPRLELIEKPDRSLCLLDEYESEELGTSHCANHRSGYVAVLGKPNVGKSTLINQIVGQKLSIVTDKPQTTRHRILGICSEPEYQIILYDTPGVIKKEMHKLDTMMMKNVRSAVGSADCVLVVVDACKMPEKIDEILEEGVGNKDTELPVLLVLNKKDLIKPGEIAKKLEWYQKFTNADDVIPISAKFGHGVDDIKEWILSKLPLGPAYYPKDIASEHPERFFVGEIVREKIFLQYRQEIPYACQVNVISYKSRPTAKDFIQVEILVEKESQRSIILGKDGKAIKMLATASRLDIEDFLQKKVYLEIMVKVKENWRQDELLLKRYGYGGEIQAL</sequence>